<sequence length="599" mass="66570">MKNIRNFSIIAHIDHGKSTLSDRIIQICGGLSDREMEAQVLDSMDLERERGITIKAQSVTLDYKASDGETYQLNFIDTPGHVDFSYEVSRSLAACEGALLVVDAGQGVEAQTLANCYTAMEMDLEVVPVLNKIDLPAADPERVAEEIEDIVGIDATDAVRCSAKTGVGVQDVLERLVRDIPPPEGDPEGPLQALIIDSWFDNYLGVVSLIRIKNGTLRKGDKVKVMSTGQTYNADRLGIFTPKQVDRTELKCGEVGWLVCAIKDIHGAPVGDTLTLARNPAEKALPGFKKVKPQVYAGLFPVSSDDYEAFRDALGKLSLNDASLFYEPESSSALGFGFRCGFLGLLHMEIIQERLEREYDLDLITTAPTVVYEVETTSREVIYVDSPSKLPAVNNIYELREPIAECHMLLPQAYLGNVITLCVEKRGVQTNMVYHGNQVALTYEIPMAEVVLDFFDRLKSTSRGYASLDYNFKRFQASDMVRVDVLINGERVDALALITHRDNSQNRGRELVEKMKDLIPRQQFDIAIQAAIGTHIIARSTVKQLRKNVLAKCYGGDISRKKKLLQKQKEGKKRMKQIGNVELPQEAFLAILHVGKDNK</sequence>
<dbReference type="EC" id="3.6.5.n1" evidence="1"/>
<dbReference type="EMBL" id="CU928145">
    <property type="protein sequence ID" value="CAU98728.1"/>
    <property type="molecule type" value="Genomic_DNA"/>
</dbReference>
<dbReference type="RefSeq" id="WP_000790168.1">
    <property type="nucleotide sequence ID" value="NC_011748.1"/>
</dbReference>
<dbReference type="SMR" id="B7LDG2"/>
<dbReference type="GeneID" id="93774522"/>
<dbReference type="KEGG" id="eck:EC55989_2858"/>
<dbReference type="HOGENOM" id="CLU_009995_3_3_6"/>
<dbReference type="Proteomes" id="UP000000746">
    <property type="component" value="Chromosome"/>
</dbReference>
<dbReference type="GO" id="GO:0005886">
    <property type="term" value="C:plasma membrane"/>
    <property type="evidence" value="ECO:0007669"/>
    <property type="project" value="UniProtKB-SubCell"/>
</dbReference>
<dbReference type="GO" id="GO:0005525">
    <property type="term" value="F:GTP binding"/>
    <property type="evidence" value="ECO:0007669"/>
    <property type="project" value="UniProtKB-UniRule"/>
</dbReference>
<dbReference type="GO" id="GO:0003924">
    <property type="term" value="F:GTPase activity"/>
    <property type="evidence" value="ECO:0007669"/>
    <property type="project" value="UniProtKB-UniRule"/>
</dbReference>
<dbReference type="GO" id="GO:0097216">
    <property type="term" value="F:guanosine tetraphosphate binding"/>
    <property type="evidence" value="ECO:0007669"/>
    <property type="project" value="UniProtKB-ARBA"/>
</dbReference>
<dbReference type="GO" id="GO:0043022">
    <property type="term" value="F:ribosome binding"/>
    <property type="evidence" value="ECO:0007669"/>
    <property type="project" value="UniProtKB-UniRule"/>
</dbReference>
<dbReference type="GO" id="GO:0003746">
    <property type="term" value="F:translation elongation factor activity"/>
    <property type="evidence" value="ECO:0007669"/>
    <property type="project" value="UniProtKB-UniRule"/>
</dbReference>
<dbReference type="GO" id="GO:0045727">
    <property type="term" value="P:positive regulation of translation"/>
    <property type="evidence" value="ECO:0007669"/>
    <property type="project" value="UniProtKB-UniRule"/>
</dbReference>
<dbReference type="CDD" id="cd03699">
    <property type="entry name" value="EF4_II"/>
    <property type="match status" value="1"/>
</dbReference>
<dbReference type="CDD" id="cd16260">
    <property type="entry name" value="EF4_III"/>
    <property type="match status" value="1"/>
</dbReference>
<dbReference type="CDD" id="cd01890">
    <property type="entry name" value="LepA"/>
    <property type="match status" value="1"/>
</dbReference>
<dbReference type="CDD" id="cd03709">
    <property type="entry name" value="lepA_C"/>
    <property type="match status" value="1"/>
</dbReference>
<dbReference type="FunFam" id="3.30.70.240:FF:000005">
    <property type="entry name" value="Elongation factor 4"/>
    <property type="match status" value="1"/>
</dbReference>
<dbReference type="FunFam" id="3.40.50.300:FF:000078">
    <property type="entry name" value="Elongation factor 4"/>
    <property type="match status" value="1"/>
</dbReference>
<dbReference type="FunFam" id="2.40.30.10:FF:000015">
    <property type="entry name" value="Translation factor GUF1, mitochondrial"/>
    <property type="match status" value="1"/>
</dbReference>
<dbReference type="FunFam" id="3.30.70.2570:FF:000001">
    <property type="entry name" value="Translation factor GUF1, mitochondrial"/>
    <property type="match status" value="1"/>
</dbReference>
<dbReference type="FunFam" id="3.30.70.870:FF:000004">
    <property type="entry name" value="Translation factor GUF1, mitochondrial"/>
    <property type="match status" value="1"/>
</dbReference>
<dbReference type="Gene3D" id="3.30.70.240">
    <property type="match status" value="1"/>
</dbReference>
<dbReference type="Gene3D" id="3.30.70.2570">
    <property type="entry name" value="Elongation factor 4, C-terminal domain"/>
    <property type="match status" value="1"/>
</dbReference>
<dbReference type="Gene3D" id="3.30.70.870">
    <property type="entry name" value="Elongation Factor G (Translational Gtpase), domain 3"/>
    <property type="match status" value="1"/>
</dbReference>
<dbReference type="Gene3D" id="3.40.50.300">
    <property type="entry name" value="P-loop containing nucleotide triphosphate hydrolases"/>
    <property type="match status" value="1"/>
</dbReference>
<dbReference type="Gene3D" id="2.40.30.10">
    <property type="entry name" value="Translation factors"/>
    <property type="match status" value="1"/>
</dbReference>
<dbReference type="HAMAP" id="MF_00071">
    <property type="entry name" value="LepA"/>
    <property type="match status" value="1"/>
</dbReference>
<dbReference type="InterPro" id="IPR006297">
    <property type="entry name" value="EF-4"/>
</dbReference>
<dbReference type="InterPro" id="IPR035647">
    <property type="entry name" value="EFG_III/V"/>
</dbReference>
<dbReference type="InterPro" id="IPR000640">
    <property type="entry name" value="EFG_V-like"/>
</dbReference>
<dbReference type="InterPro" id="IPR004161">
    <property type="entry name" value="EFTu-like_2"/>
</dbReference>
<dbReference type="InterPro" id="IPR031157">
    <property type="entry name" value="G_TR_CS"/>
</dbReference>
<dbReference type="InterPro" id="IPR038363">
    <property type="entry name" value="LepA_C_sf"/>
</dbReference>
<dbReference type="InterPro" id="IPR013842">
    <property type="entry name" value="LepA_CTD"/>
</dbReference>
<dbReference type="InterPro" id="IPR035654">
    <property type="entry name" value="LepA_IV"/>
</dbReference>
<dbReference type="InterPro" id="IPR027417">
    <property type="entry name" value="P-loop_NTPase"/>
</dbReference>
<dbReference type="InterPro" id="IPR005225">
    <property type="entry name" value="Small_GTP-bd"/>
</dbReference>
<dbReference type="InterPro" id="IPR000795">
    <property type="entry name" value="T_Tr_GTP-bd_dom"/>
</dbReference>
<dbReference type="NCBIfam" id="TIGR01393">
    <property type="entry name" value="lepA"/>
    <property type="match status" value="1"/>
</dbReference>
<dbReference type="NCBIfam" id="TIGR00231">
    <property type="entry name" value="small_GTP"/>
    <property type="match status" value="1"/>
</dbReference>
<dbReference type="PANTHER" id="PTHR43512:SF4">
    <property type="entry name" value="TRANSLATION FACTOR GUF1 HOMOLOG, CHLOROPLASTIC"/>
    <property type="match status" value="1"/>
</dbReference>
<dbReference type="PANTHER" id="PTHR43512">
    <property type="entry name" value="TRANSLATION FACTOR GUF1-RELATED"/>
    <property type="match status" value="1"/>
</dbReference>
<dbReference type="Pfam" id="PF00679">
    <property type="entry name" value="EFG_C"/>
    <property type="match status" value="1"/>
</dbReference>
<dbReference type="Pfam" id="PF00009">
    <property type="entry name" value="GTP_EFTU"/>
    <property type="match status" value="1"/>
</dbReference>
<dbReference type="Pfam" id="PF03144">
    <property type="entry name" value="GTP_EFTU_D2"/>
    <property type="match status" value="1"/>
</dbReference>
<dbReference type="Pfam" id="PF06421">
    <property type="entry name" value="LepA_C"/>
    <property type="match status" value="1"/>
</dbReference>
<dbReference type="PRINTS" id="PR00315">
    <property type="entry name" value="ELONGATNFCT"/>
</dbReference>
<dbReference type="SUPFAM" id="SSF54980">
    <property type="entry name" value="EF-G C-terminal domain-like"/>
    <property type="match status" value="2"/>
</dbReference>
<dbReference type="SUPFAM" id="SSF52540">
    <property type="entry name" value="P-loop containing nucleoside triphosphate hydrolases"/>
    <property type="match status" value="1"/>
</dbReference>
<dbReference type="PROSITE" id="PS00301">
    <property type="entry name" value="G_TR_1"/>
    <property type="match status" value="1"/>
</dbReference>
<dbReference type="PROSITE" id="PS51722">
    <property type="entry name" value="G_TR_2"/>
    <property type="match status" value="1"/>
</dbReference>
<evidence type="ECO:0000255" key="1">
    <source>
        <dbReference type="HAMAP-Rule" id="MF_00071"/>
    </source>
</evidence>
<gene>
    <name evidence="1" type="primary">lepA</name>
    <name type="ordered locus">EC55989_2858</name>
</gene>
<comment type="function">
    <text evidence="1">Required for accurate and efficient protein synthesis under certain stress conditions. May act as a fidelity factor of the translation reaction, by catalyzing a one-codon backward translocation of tRNAs on improperly translocated ribosomes. Back-translocation proceeds from a post-translocation (POST) complex to a pre-translocation (PRE) complex, thus giving elongation factor G a second chance to translocate the tRNAs correctly. Binds to ribosomes in a GTP-dependent manner.</text>
</comment>
<comment type="catalytic activity">
    <reaction evidence="1">
        <text>GTP + H2O = GDP + phosphate + H(+)</text>
        <dbReference type="Rhea" id="RHEA:19669"/>
        <dbReference type="ChEBI" id="CHEBI:15377"/>
        <dbReference type="ChEBI" id="CHEBI:15378"/>
        <dbReference type="ChEBI" id="CHEBI:37565"/>
        <dbReference type="ChEBI" id="CHEBI:43474"/>
        <dbReference type="ChEBI" id="CHEBI:58189"/>
        <dbReference type="EC" id="3.6.5.n1"/>
    </reaction>
</comment>
<comment type="subcellular location">
    <subcellularLocation>
        <location evidence="1">Cell inner membrane</location>
        <topology evidence="1">Peripheral membrane protein</topology>
        <orientation evidence="1">Cytoplasmic side</orientation>
    </subcellularLocation>
</comment>
<comment type="similarity">
    <text evidence="1">Belongs to the TRAFAC class translation factor GTPase superfamily. Classic translation factor GTPase family. LepA subfamily.</text>
</comment>
<keyword id="KW-0997">Cell inner membrane</keyword>
<keyword id="KW-1003">Cell membrane</keyword>
<keyword id="KW-0342">GTP-binding</keyword>
<keyword id="KW-0378">Hydrolase</keyword>
<keyword id="KW-0472">Membrane</keyword>
<keyword id="KW-0547">Nucleotide-binding</keyword>
<keyword id="KW-0648">Protein biosynthesis</keyword>
<keyword id="KW-1185">Reference proteome</keyword>
<organism>
    <name type="scientific">Escherichia coli (strain 55989 / EAEC)</name>
    <dbReference type="NCBI Taxonomy" id="585055"/>
    <lineage>
        <taxon>Bacteria</taxon>
        <taxon>Pseudomonadati</taxon>
        <taxon>Pseudomonadota</taxon>
        <taxon>Gammaproteobacteria</taxon>
        <taxon>Enterobacterales</taxon>
        <taxon>Enterobacteriaceae</taxon>
        <taxon>Escherichia</taxon>
    </lineage>
</organism>
<protein>
    <recommendedName>
        <fullName evidence="1">Elongation factor 4</fullName>
        <shortName evidence="1">EF-4</shortName>
        <ecNumber evidence="1">3.6.5.n1</ecNumber>
    </recommendedName>
    <alternativeName>
        <fullName evidence="1">Ribosomal back-translocase LepA</fullName>
    </alternativeName>
</protein>
<reference key="1">
    <citation type="journal article" date="2009" name="PLoS Genet.">
        <title>Organised genome dynamics in the Escherichia coli species results in highly diverse adaptive paths.</title>
        <authorList>
            <person name="Touchon M."/>
            <person name="Hoede C."/>
            <person name="Tenaillon O."/>
            <person name="Barbe V."/>
            <person name="Baeriswyl S."/>
            <person name="Bidet P."/>
            <person name="Bingen E."/>
            <person name="Bonacorsi S."/>
            <person name="Bouchier C."/>
            <person name="Bouvet O."/>
            <person name="Calteau A."/>
            <person name="Chiapello H."/>
            <person name="Clermont O."/>
            <person name="Cruveiller S."/>
            <person name="Danchin A."/>
            <person name="Diard M."/>
            <person name="Dossat C."/>
            <person name="Karoui M.E."/>
            <person name="Frapy E."/>
            <person name="Garry L."/>
            <person name="Ghigo J.M."/>
            <person name="Gilles A.M."/>
            <person name="Johnson J."/>
            <person name="Le Bouguenec C."/>
            <person name="Lescat M."/>
            <person name="Mangenot S."/>
            <person name="Martinez-Jehanne V."/>
            <person name="Matic I."/>
            <person name="Nassif X."/>
            <person name="Oztas S."/>
            <person name="Petit M.A."/>
            <person name="Pichon C."/>
            <person name="Rouy Z."/>
            <person name="Ruf C.S."/>
            <person name="Schneider D."/>
            <person name="Tourret J."/>
            <person name="Vacherie B."/>
            <person name="Vallenet D."/>
            <person name="Medigue C."/>
            <person name="Rocha E.P.C."/>
            <person name="Denamur E."/>
        </authorList>
    </citation>
    <scope>NUCLEOTIDE SEQUENCE [LARGE SCALE GENOMIC DNA]</scope>
    <source>
        <strain>55989 / EAEC</strain>
    </source>
</reference>
<proteinExistence type="inferred from homology"/>
<accession>B7LDG2</accession>
<name>LEPA_ECO55</name>
<feature type="chain" id="PRO_1000190810" description="Elongation factor 4">
    <location>
        <begin position="1"/>
        <end position="599"/>
    </location>
</feature>
<feature type="domain" description="tr-type G">
    <location>
        <begin position="2"/>
        <end position="184"/>
    </location>
</feature>
<feature type="binding site" evidence="1">
    <location>
        <begin position="14"/>
        <end position="19"/>
    </location>
    <ligand>
        <name>GTP</name>
        <dbReference type="ChEBI" id="CHEBI:37565"/>
    </ligand>
</feature>
<feature type="binding site" evidence="1">
    <location>
        <begin position="131"/>
        <end position="134"/>
    </location>
    <ligand>
        <name>GTP</name>
        <dbReference type="ChEBI" id="CHEBI:37565"/>
    </ligand>
</feature>